<sequence>MRVLVVEDNALLRHHLKVQIQDAGHQVDDAEDAKEADYYLNEHLPDIAIVDLGLPDEDGLSLIRRWRSNDVSLPILVLTARESWQDKVEVLSAGADDYVTKPFHIEEVMARMQALMRRNSGLASQVISLPPFQVDLSRRELSINDEVIKLTAFEYTIMETLIRNNGKVVSKDSLMLQLYPDAELRESHTIDVLMGRLRKKIQAQYPQEVITTVRGQGYLFELR</sequence>
<keyword id="KW-0010">Activator</keyword>
<keyword id="KW-0963">Cytoplasm</keyword>
<keyword id="KW-0238">DNA-binding</keyword>
<keyword id="KW-0597">Phosphoprotein</keyword>
<keyword id="KW-1185">Reference proteome</keyword>
<keyword id="KW-0678">Repressor</keyword>
<keyword id="KW-0804">Transcription</keyword>
<keyword id="KW-0805">Transcription regulation</keyword>
<keyword id="KW-0902">Two-component regulatory system</keyword>
<proteinExistence type="inferred from homology"/>
<protein>
    <recommendedName>
        <fullName>Transcriptional regulatory protein PhoP</fullName>
    </recommendedName>
</protein>
<gene>
    <name type="primary">phoP</name>
    <name type="ordered locus">c1509</name>
</gene>
<name>PHOP_ECOL6</name>
<comment type="function">
    <text evidence="1">Member of the two-component regulatory system PhoQ/PhoP involved in virulence, adaptation to low Mg(2+) environments and the control of acid resistance genes.</text>
</comment>
<comment type="subcellular location">
    <subcellularLocation>
        <location evidence="4">Cytoplasm</location>
    </subcellularLocation>
</comment>
<comment type="PTM">
    <text evidence="4">Phosphorylated by PhoQ.</text>
</comment>
<reference key="1">
    <citation type="journal article" date="2002" name="Proc. Natl. Acad. Sci. U.S.A.">
        <title>Extensive mosaic structure revealed by the complete genome sequence of uropathogenic Escherichia coli.</title>
        <authorList>
            <person name="Welch R.A."/>
            <person name="Burland V."/>
            <person name="Plunkett G. III"/>
            <person name="Redford P."/>
            <person name="Roesch P."/>
            <person name="Rasko D."/>
            <person name="Buckles E.L."/>
            <person name="Liou S.-R."/>
            <person name="Boutin A."/>
            <person name="Hackett J."/>
            <person name="Stroud D."/>
            <person name="Mayhew G.F."/>
            <person name="Rose D.J."/>
            <person name="Zhou S."/>
            <person name="Schwartz D.C."/>
            <person name="Perna N.T."/>
            <person name="Mobley H.L.T."/>
            <person name="Donnenberg M.S."/>
            <person name="Blattner F.R."/>
        </authorList>
    </citation>
    <scope>NUCLEOTIDE SEQUENCE [LARGE SCALE GENOMIC DNA]</scope>
    <source>
        <strain>CFT073 / ATCC 700928 / UPEC</strain>
    </source>
</reference>
<feature type="chain" id="PRO_0000081197" description="Transcriptional regulatory protein PhoP">
    <location>
        <begin position="1"/>
        <end position="223"/>
    </location>
</feature>
<feature type="domain" description="Response regulatory" evidence="2">
    <location>
        <begin position="2"/>
        <end position="116"/>
    </location>
</feature>
<feature type="DNA-binding region" description="OmpR/PhoB-type" evidence="3">
    <location>
        <begin position="124"/>
        <end position="222"/>
    </location>
</feature>
<feature type="modified residue" description="4-aspartylphosphate" evidence="2">
    <location>
        <position position="51"/>
    </location>
</feature>
<accession>Q8CXZ9</accession>
<organism>
    <name type="scientific">Escherichia coli O6:H1 (strain CFT073 / ATCC 700928 / UPEC)</name>
    <dbReference type="NCBI Taxonomy" id="199310"/>
    <lineage>
        <taxon>Bacteria</taxon>
        <taxon>Pseudomonadati</taxon>
        <taxon>Pseudomonadota</taxon>
        <taxon>Gammaproteobacteria</taxon>
        <taxon>Enterobacterales</taxon>
        <taxon>Enterobacteriaceae</taxon>
        <taxon>Escherichia</taxon>
    </lineage>
</organism>
<evidence type="ECO:0000250" key="1"/>
<evidence type="ECO:0000255" key="2">
    <source>
        <dbReference type="PROSITE-ProRule" id="PRU00169"/>
    </source>
</evidence>
<evidence type="ECO:0000255" key="3">
    <source>
        <dbReference type="PROSITE-ProRule" id="PRU01091"/>
    </source>
</evidence>
<evidence type="ECO:0000305" key="4"/>
<dbReference type="EMBL" id="AE014075">
    <property type="protein sequence ID" value="AAN79978.1"/>
    <property type="molecule type" value="Genomic_DNA"/>
</dbReference>
<dbReference type="RefSeq" id="WP_001265481.1">
    <property type="nucleotide sequence ID" value="NZ_CP051263.1"/>
</dbReference>
<dbReference type="SMR" id="Q8CXZ9"/>
<dbReference type="STRING" id="199310.c1509"/>
<dbReference type="GeneID" id="93776280"/>
<dbReference type="KEGG" id="ecc:c1509"/>
<dbReference type="eggNOG" id="COG0745">
    <property type="taxonomic scope" value="Bacteria"/>
</dbReference>
<dbReference type="HOGENOM" id="CLU_000445_30_1_6"/>
<dbReference type="BioCyc" id="ECOL199310:C1509-MONOMER"/>
<dbReference type="Proteomes" id="UP000001410">
    <property type="component" value="Chromosome"/>
</dbReference>
<dbReference type="GO" id="GO:0005829">
    <property type="term" value="C:cytosol"/>
    <property type="evidence" value="ECO:0007669"/>
    <property type="project" value="TreeGrafter"/>
</dbReference>
<dbReference type="GO" id="GO:0032993">
    <property type="term" value="C:protein-DNA complex"/>
    <property type="evidence" value="ECO:0007669"/>
    <property type="project" value="TreeGrafter"/>
</dbReference>
<dbReference type="GO" id="GO:0000156">
    <property type="term" value="F:phosphorelay response regulator activity"/>
    <property type="evidence" value="ECO:0007669"/>
    <property type="project" value="TreeGrafter"/>
</dbReference>
<dbReference type="GO" id="GO:0000976">
    <property type="term" value="F:transcription cis-regulatory region binding"/>
    <property type="evidence" value="ECO:0007669"/>
    <property type="project" value="TreeGrafter"/>
</dbReference>
<dbReference type="GO" id="GO:0006355">
    <property type="term" value="P:regulation of DNA-templated transcription"/>
    <property type="evidence" value="ECO:0007669"/>
    <property type="project" value="InterPro"/>
</dbReference>
<dbReference type="CDD" id="cd19934">
    <property type="entry name" value="REC_OmpR_EcPhoP-like"/>
    <property type="match status" value="1"/>
</dbReference>
<dbReference type="CDD" id="cd00383">
    <property type="entry name" value="trans_reg_C"/>
    <property type="match status" value="1"/>
</dbReference>
<dbReference type="FunFam" id="3.40.50.2300:FF:000002">
    <property type="entry name" value="DNA-binding response regulator PhoP"/>
    <property type="match status" value="1"/>
</dbReference>
<dbReference type="FunFam" id="1.10.10.10:FF:000098">
    <property type="entry name" value="Two-component system response regulator PhoP"/>
    <property type="match status" value="1"/>
</dbReference>
<dbReference type="Gene3D" id="3.40.50.2300">
    <property type="match status" value="1"/>
</dbReference>
<dbReference type="Gene3D" id="6.10.250.690">
    <property type="match status" value="1"/>
</dbReference>
<dbReference type="Gene3D" id="1.10.10.10">
    <property type="entry name" value="Winged helix-like DNA-binding domain superfamily/Winged helix DNA-binding domain"/>
    <property type="match status" value="1"/>
</dbReference>
<dbReference type="InterPro" id="IPR011006">
    <property type="entry name" value="CheY-like_superfamily"/>
</dbReference>
<dbReference type="InterPro" id="IPR001867">
    <property type="entry name" value="OmpR/PhoB-type_DNA-bd"/>
</dbReference>
<dbReference type="InterPro" id="IPR001789">
    <property type="entry name" value="Sig_transdc_resp-reg_receiver"/>
</dbReference>
<dbReference type="InterPro" id="IPR039420">
    <property type="entry name" value="WalR-like"/>
</dbReference>
<dbReference type="InterPro" id="IPR036388">
    <property type="entry name" value="WH-like_DNA-bd_sf"/>
</dbReference>
<dbReference type="NCBIfam" id="NF008078">
    <property type="entry name" value="PRK10816.1"/>
    <property type="match status" value="1"/>
</dbReference>
<dbReference type="PANTHER" id="PTHR48111">
    <property type="entry name" value="REGULATOR OF RPOS"/>
    <property type="match status" value="1"/>
</dbReference>
<dbReference type="PANTHER" id="PTHR48111:SF71">
    <property type="entry name" value="TRANSCRIPTIONAL REGULATORY PROTEIN PHOP"/>
    <property type="match status" value="1"/>
</dbReference>
<dbReference type="Pfam" id="PF00072">
    <property type="entry name" value="Response_reg"/>
    <property type="match status" value="1"/>
</dbReference>
<dbReference type="Pfam" id="PF00486">
    <property type="entry name" value="Trans_reg_C"/>
    <property type="match status" value="1"/>
</dbReference>
<dbReference type="SMART" id="SM00448">
    <property type="entry name" value="REC"/>
    <property type="match status" value="1"/>
</dbReference>
<dbReference type="SMART" id="SM00862">
    <property type="entry name" value="Trans_reg_C"/>
    <property type="match status" value="1"/>
</dbReference>
<dbReference type="SUPFAM" id="SSF52172">
    <property type="entry name" value="CheY-like"/>
    <property type="match status" value="1"/>
</dbReference>
<dbReference type="PROSITE" id="PS51755">
    <property type="entry name" value="OMPR_PHOB"/>
    <property type="match status" value="1"/>
</dbReference>
<dbReference type="PROSITE" id="PS50110">
    <property type="entry name" value="RESPONSE_REGULATORY"/>
    <property type="match status" value="1"/>
</dbReference>